<organism>
    <name type="scientific">Shewanella pealeana (strain ATCC 700345 / ANG-SQ1)</name>
    <dbReference type="NCBI Taxonomy" id="398579"/>
    <lineage>
        <taxon>Bacteria</taxon>
        <taxon>Pseudomonadati</taxon>
        <taxon>Pseudomonadota</taxon>
        <taxon>Gammaproteobacteria</taxon>
        <taxon>Alteromonadales</taxon>
        <taxon>Shewanellaceae</taxon>
        <taxon>Shewanella</taxon>
    </lineage>
</organism>
<sequence length="256" mass="28597">MNKLLIIDGMNLVRRIHAAQPNESDITGLKERVHGACRKLLKYHIPTHAAIVWDGDAISWRKTLFPDYKKGRKPMPEALANGLNDIKAYLAEHHIHSVDADSEADDVIATLATKLVNIDGEAIIVSTDKGFSQLNHPKIKLWDHFNQTYLTIEEMEKKLGIERSQLIDYLALAGDSGNKIPGVPGIGPKSAVELLRIYRSLASIYNSIDKVGAKQAKKLEAGKQMARLSYKLVQLKTDMPLSVNLKQFRIKKPDSE</sequence>
<evidence type="ECO:0000255" key="1">
    <source>
        <dbReference type="HAMAP-Rule" id="MF_01192"/>
    </source>
</evidence>
<proteinExistence type="inferred from homology"/>
<keyword id="KW-0238">DNA-binding</keyword>
<keyword id="KW-0255">Endonuclease</keyword>
<keyword id="KW-0378">Hydrolase</keyword>
<keyword id="KW-0460">Magnesium</keyword>
<keyword id="KW-0479">Metal-binding</keyword>
<keyword id="KW-0540">Nuclease</keyword>
<keyword id="KW-0630">Potassium</keyword>
<keyword id="KW-1185">Reference proteome</keyword>
<accession>A8H6V6</accession>
<dbReference type="EC" id="3.1.-.-" evidence="1"/>
<dbReference type="EMBL" id="CP000851">
    <property type="protein sequence ID" value="ABV88293.1"/>
    <property type="molecule type" value="Genomic_DNA"/>
</dbReference>
<dbReference type="RefSeq" id="WP_012156197.1">
    <property type="nucleotide sequence ID" value="NC_009901.1"/>
</dbReference>
<dbReference type="SMR" id="A8H6V6"/>
<dbReference type="STRING" id="398579.Spea_2976"/>
<dbReference type="KEGG" id="spl:Spea_2976"/>
<dbReference type="eggNOG" id="COG0258">
    <property type="taxonomic scope" value="Bacteria"/>
</dbReference>
<dbReference type="HOGENOM" id="CLU_004675_1_2_6"/>
<dbReference type="OrthoDB" id="8070997at2"/>
<dbReference type="Proteomes" id="UP000002608">
    <property type="component" value="Chromosome"/>
</dbReference>
<dbReference type="GO" id="GO:0008409">
    <property type="term" value="F:5'-3' exonuclease activity"/>
    <property type="evidence" value="ECO:0007669"/>
    <property type="project" value="InterPro"/>
</dbReference>
<dbReference type="GO" id="GO:0017108">
    <property type="term" value="F:5'-flap endonuclease activity"/>
    <property type="evidence" value="ECO:0007669"/>
    <property type="project" value="UniProtKB-UniRule"/>
</dbReference>
<dbReference type="GO" id="GO:0003677">
    <property type="term" value="F:DNA binding"/>
    <property type="evidence" value="ECO:0007669"/>
    <property type="project" value="UniProtKB-UniRule"/>
</dbReference>
<dbReference type="GO" id="GO:0000287">
    <property type="term" value="F:magnesium ion binding"/>
    <property type="evidence" value="ECO:0007669"/>
    <property type="project" value="UniProtKB-UniRule"/>
</dbReference>
<dbReference type="GO" id="GO:0030955">
    <property type="term" value="F:potassium ion binding"/>
    <property type="evidence" value="ECO:0007669"/>
    <property type="project" value="UniProtKB-UniRule"/>
</dbReference>
<dbReference type="GO" id="GO:0033567">
    <property type="term" value="P:DNA replication, Okazaki fragment processing"/>
    <property type="evidence" value="ECO:0007669"/>
    <property type="project" value="UniProtKB-UniRule"/>
</dbReference>
<dbReference type="CDD" id="cd09898">
    <property type="entry name" value="H3TH_53EXO"/>
    <property type="match status" value="1"/>
</dbReference>
<dbReference type="CDD" id="cd09859">
    <property type="entry name" value="PIN_53EXO"/>
    <property type="match status" value="1"/>
</dbReference>
<dbReference type="FunFam" id="1.10.150.20:FF:000003">
    <property type="entry name" value="DNA polymerase I"/>
    <property type="match status" value="1"/>
</dbReference>
<dbReference type="Gene3D" id="1.10.150.20">
    <property type="entry name" value="5' to 3' exonuclease, C-terminal subdomain"/>
    <property type="match status" value="1"/>
</dbReference>
<dbReference type="Gene3D" id="3.40.50.1010">
    <property type="entry name" value="5'-nuclease"/>
    <property type="match status" value="1"/>
</dbReference>
<dbReference type="HAMAP" id="MF_01192">
    <property type="entry name" value="Xni"/>
    <property type="match status" value="1"/>
</dbReference>
<dbReference type="InterPro" id="IPR020046">
    <property type="entry name" value="5-3_exonucl_a-hlix_arch_N"/>
</dbReference>
<dbReference type="InterPro" id="IPR002421">
    <property type="entry name" value="5-3_exonuclease"/>
</dbReference>
<dbReference type="InterPro" id="IPR036279">
    <property type="entry name" value="5-3_exonuclease_C_sf"/>
</dbReference>
<dbReference type="InterPro" id="IPR020045">
    <property type="entry name" value="DNA_polI_H3TH"/>
</dbReference>
<dbReference type="InterPro" id="IPR038969">
    <property type="entry name" value="FEN"/>
</dbReference>
<dbReference type="InterPro" id="IPR008918">
    <property type="entry name" value="HhH2"/>
</dbReference>
<dbReference type="InterPro" id="IPR029060">
    <property type="entry name" value="PIN-like_dom_sf"/>
</dbReference>
<dbReference type="InterPro" id="IPR022895">
    <property type="entry name" value="Xni"/>
</dbReference>
<dbReference type="NCBIfam" id="NF007017">
    <property type="entry name" value="PRK09482.1"/>
    <property type="match status" value="1"/>
</dbReference>
<dbReference type="PANTHER" id="PTHR42646:SF2">
    <property type="entry name" value="5'-3' EXONUCLEASE FAMILY PROTEIN"/>
    <property type="match status" value="1"/>
</dbReference>
<dbReference type="PANTHER" id="PTHR42646">
    <property type="entry name" value="FLAP ENDONUCLEASE XNI"/>
    <property type="match status" value="1"/>
</dbReference>
<dbReference type="Pfam" id="PF01367">
    <property type="entry name" value="5_3_exonuc"/>
    <property type="match status" value="1"/>
</dbReference>
<dbReference type="Pfam" id="PF02739">
    <property type="entry name" value="5_3_exonuc_N"/>
    <property type="match status" value="1"/>
</dbReference>
<dbReference type="SMART" id="SM00475">
    <property type="entry name" value="53EXOc"/>
    <property type="match status" value="1"/>
</dbReference>
<dbReference type="SMART" id="SM00279">
    <property type="entry name" value="HhH2"/>
    <property type="match status" value="1"/>
</dbReference>
<dbReference type="SUPFAM" id="SSF47807">
    <property type="entry name" value="5' to 3' exonuclease, C-terminal subdomain"/>
    <property type="match status" value="1"/>
</dbReference>
<dbReference type="SUPFAM" id="SSF88723">
    <property type="entry name" value="PIN domain-like"/>
    <property type="match status" value="1"/>
</dbReference>
<gene>
    <name evidence="1" type="primary">xni</name>
    <name evidence="1" type="synonym">ygdG</name>
    <name type="ordered locus">Spea_2976</name>
</gene>
<protein>
    <recommendedName>
        <fullName evidence="1">Flap endonuclease Xni</fullName>
        <shortName evidence="1">FEN</shortName>
        <ecNumber evidence="1">3.1.-.-</ecNumber>
    </recommendedName>
</protein>
<comment type="function">
    <text evidence="1">Has flap endonuclease activity. During DNA replication, flap endonucleases cleave the 5'-overhanging flap structure that is generated by displacement synthesis when DNA polymerase encounters the 5'-end of a downstream Okazaki fragment.</text>
</comment>
<comment type="cofactor">
    <cofactor evidence="1">
        <name>Mg(2+)</name>
        <dbReference type="ChEBI" id="CHEBI:18420"/>
    </cofactor>
    <text evidence="1">Binds 2 Mg(2+) per subunit. Only one magnesium ion has a direct interaction with the protein, the other interactions are indirect.</text>
</comment>
<comment type="cofactor">
    <cofactor evidence="1">
        <name>K(+)</name>
        <dbReference type="ChEBI" id="CHEBI:29103"/>
    </cofactor>
    <text evidence="1">Binds 1 K(+) per subunit. The potassium ion strongly increases the affinity for DNA.</text>
</comment>
<comment type="similarity">
    <text evidence="1">Belongs to the Xni family.</text>
</comment>
<reference key="1">
    <citation type="submission" date="2007-10" db="EMBL/GenBank/DDBJ databases">
        <title>Complete sequence of Shewanella pealeana ATCC 700345.</title>
        <authorList>
            <consortium name="US DOE Joint Genome Institute"/>
            <person name="Copeland A."/>
            <person name="Lucas S."/>
            <person name="Lapidus A."/>
            <person name="Barry K."/>
            <person name="Glavina del Rio T."/>
            <person name="Dalin E."/>
            <person name="Tice H."/>
            <person name="Pitluck S."/>
            <person name="Chertkov O."/>
            <person name="Brettin T."/>
            <person name="Bruce D."/>
            <person name="Detter J.C."/>
            <person name="Han C."/>
            <person name="Schmutz J."/>
            <person name="Larimer F."/>
            <person name="Land M."/>
            <person name="Hauser L."/>
            <person name="Kyrpides N."/>
            <person name="Kim E."/>
            <person name="Zhao J.-S.Z."/>
            <person name="Manno D."/>
            <person name="Hawari J."/>
            <person name="Richardson P."/>
        </authorList>
    </citation>
    <scope>NUCLEOTIDE SEQUENCE [LARGE SCALE GENOMIC DNA]</scope>
    <source>
        <strain>ATCC 700345 / ANG-SQ1</strain>
    </source>
</reference>
<feature type="chain" id="PRO_1000085478" description="Flap endonuclease Xni">
    <location>
        <begin position="1"/>
        <end position="256"/>
    </location>
</feature>
<feature type="domain" description="5'-3' exonuclease" evidence="1">
    <location>
        <begin position="163"/>
        <end position="256"/>
    </location>
</feature>
<feature type="region of interest" description="Interaction with DNA" evidence="1">
    <location>
        <begin position="185"/>
        <end position="190"/>
    </location>
</feature>
<feature type="binding site" evidence="1">
    <location>
        <position position="105"/>
    </location>
    <ligand>
        <name>Mg(2+)</name>
        <dbReference type="ChEBI" id="CHEBI:18420"/>
    </ligand>
</feature>
<feature type="binding site" evidence="1">
    <location>
        <position position="172"/>
    </location>
    <ligand>
        <name>K(+)</name>
        <dbReference type="ChEBI" id="CHEBI:29103"/>
    </ligand>
</feature>
<feature type="binding site" evidence="1">
    <location>
        <position position="173"/>
    </location>
    <ligand>
        <name>K(+)</name>
        <dbReference type="ChEBI" id="CHEBI:29103"/>
    </ligand>
</feature>
<feature type="binding site" evidence="1">
    <location>
        <position position="181"/>
    </location>
    <ligand>
        <name>K(+)</name>
        <dbReference type="ChEBI" id="CHEBI:29103"/>
    </ligand>
</feature>
<feature type="binding site" evidence="1">
    <location>
        <position position="183"/>
    </location>
    <ligand>
        <name>K(+)</name>
        <dbReference type="ChEBI" id="CHEBI:29103"/>
    </ligand>
</feature>
<feature type="binding site" evidence="1">
    <location>
        <position position="186"/>
    </location>
    <ligand>
        <name>K(+)</name>
        <dbReference type="ChEBI" id="CHEBI:29103"/>
    </ligand>
</feature>
<name>XNI_SHEPA</name>